<keyword id="KW-0156">Chromatin regulator</keyword>
<keyword id="KW-0963">Cytoplasm</keyword>
<keyword id="KW-0274">FAD</keyword>
<keyword id="KW-0285">Flavoprotein</keyword>
<keyword id="KW-0539">Nucleus</keyword>
<keyword id="KW-0560">Oxidoreductase</keyword>
<keyword id="KW-1185">Reference proteome</keyword>
<keyword id="KW-0678">Repressor</keyword>
<keyword id="KW-0804">Transcription</keyword>
<keyword id="KW-0805">Transcription regulation</keyword>
<gene>
    <name evidence="10 12" type="primary">LDL1</name>
    <name evidence="11" type="synonym">KDM1C</name>
    <name evidence="10" type="synonym">LSD1</name>
    <name evidence="9" type="synonym">SWP1</name>
    <name evidence="14" type="ordered locus">At1g62830</name>
    <name evidence="15" type="ORF">F23N19.19</name>
</gene>
<sequence length="844" mass="93312">MSTETKETRPETKPEDLGTHTTVDVPGEEPLGELIADDVNEVVSDASATETDFSLSPSQSEQNIEEDGQNSLDDQSPLTELQPLPLPPPLPVEARISESLGEEESSDLVTEQQSQNPNAAEPGPRARKRRRRKRFFTEINANPAFSRNRRTSVGKEVDSEALIAMSVGFPVYSLTEEEIEANVVSIIGGKDQANYIVVRNHIIALWRSNVSNWLTRDHALESIRAEHKTLVDTAYNFLLEHGYINFGLAPVIKEAKLRSFDGVEPPNVVVVGAGLAGLVAARQLLSMGFRVLVLEGRDRPGGRVKTRKMKGGDGVEAMADVGGSVLTGINGNPLGVLARQLGLPLHKVRDICPLYLPNGELADASVDSKIEASFNKLLDRVCKLRQSMIEENKSVDVPLGEALETFRLVYGVAEDQQERMLLDWHLANLEYANATLLGNLSMAYWDQDDPYEMGGDHCFIPGGNEIFVHALAENLPIFYGSTVESIRYGSNGVLVYTGNKEFHCDMALCTVPLGVLKKGSIEFYPELPHKKKEAIQRLGFGLLNKVAMLFPCNFWGEEIDTFGRLTEDPSTRGEFFLFYSYSSVSGGPLLVALVAGDAAERFETLSPTDSVKRVLQILRGIYHPKGIVVPDPVQALCSRWGQDKFSYGSYSYVAVGSSGDDYDILAESVGDGRVFFAGEATNRQYPATMHGAFLSGMREAANILRVARRRASSSALNPNQICIDKEEEVDEEEDRCLDQLFETPDLTFGNFSVLFTPNSDEPESMSLLRVRIQMEKPESGLWLYGLVTRKQAIELGEMDGDELRNEYLREKLGLVPVERKSLSQEGESMISSLKAARLNRQIFD</sequence>
<name>LDL1_ARATH</name>
<protein>
    <recommendedName>
        <fullName evidence="10">Lysine-specific histone demethylase 1 homolog 1</fullName>
        <shortName evidence="11">Lysine-specific histone demethylase 1C</shortName>
        <ecNumber evidence="13">1.-.-.-</ecNumber>
    </recommendedName>
    <alternativeName>
        <fullName>Flavin-containing amine oxidase domain-containing protein 1</fullName>
    </alternativeName>
    <alternativeName>
        <fullName evidence="10 12">Protein LSD1-LIKE 1</fullName>
        <shortName evidence="10">AtLSD1</shortName>
    </alternativeName>
    <alternativeName>
        <fullName evidence="9">Protein SWIRM-PAO 1</fullName>
        <shortName evidence="9">AtSWP1</shortName>
    </alternativeName>
</protein>
<evidence type="ECO:0000250" key="1">
    <source>
        <dbReference type="UniProtKB" id="O60341"/>
    </source>
</evidence>
<evidence type="ECO:0000255" key="2">
    <source>
        <dbReference type="PROSITE-ProRule" id="PRU00247"/>
    </source>
</evidence>
<evidence type="ECO:0000255" key="3">
    <source>
        <dbReference type="PROSITE-ProRule" id="PRU00768"/>
    </source>
</evidence>
<evidence type="ECO:0000256" key="4">
    <source>
        <dbReference type="SAM" id="MobiDB-lite"/>
    </source>
</evidence>
<evidence type="ECO:0000269" key="5">
    <source>
    </source>
</evidence>
<evidence type="ECO:0000269" key="6">
    <source>
    </source>
</evidence>
<evidence type="ECO:0000269" key="7">
    <source>
    </source>
</evidence>
<evidence type="ECO:0000269" key="8">
    <source>
    </source>
</evidence>
<evidence type="ECO:0000303" key="9">
    <source>
    </source>
</evidence>
<evidence type="ECO:0000303" key="10">
    <source>
    </source>
</evidence>
<evidence type="ECO:0000303" key="11">
    <source>
    </source>
</evidence>
<evidence type="ECO:0000303" key="12">
    <source>
    </source>
</evidence>
<evidence type="ECO:0000305" key="13"/>
<evidence type="ECO:0000312" key="14">
    <source>
        <dbReference type="Araport" id="AT1G62830"/>
    </source>
</evidence>
<evidence type="ECO:0000312" key="15">
    <source>
        <dbReference type="EMBL" id="AAF19542.1"/>
    </source>
</evidence>
<reference key="1">
    <citation type="journal article" date="2000" name="Nature">
        <title>Sequence and analysis of chromosome 1 of the plant Arabidopsis thaliana.</title>
        <authorList>
            <person name="Theologis A."/>
            <person name="Ecker J.R."/>
            <person name="Palm C.J."/>
            <person name="Federspiel N.A."/>
            <person name="Kaul S."/>
            <person name="White O."/>
            <person name="Alonso J."/>
            <person name="Altafi H."/>
            <person name="Araujo R."/>
            <person name="Bowman C.L."/>
            <person name="Brooks S.Y."/>
            <person name="Buehler E."/>
            <person name="Chan A."/>
            <person name="Chao Q."/>
            <person name="Chen H."/>
            <person name="Cheuk R.F."/>
            <person name="Chin C.W."/>
            <person name="Chung M.K."/>
            <person name="Conn L."/>
            <person name="Conway A.B."/>
            <person name="Conway A.R."/>
            <person name="Creasy T.H."/>
            <person name="Dewar K."/>
            <person name="Dunn P."/>
            <person name="Etgu P."/>
            <person name="Feldblyum T.V."/>
            <person name="Feng J.-D."/>
            <person name="Fong B."/>
            <person name="Fujii C.Y."/>
            <person name="Gill J.E."/>
            <person name="Goldsmith A.D."/>
            <person name="Haas B."/>
            <person name="Hansen N.F."/>
            <person name="Hughes B."/>
            <person name="Huizar L."/>
            <person name="Hunter J.L."/>
            <person name="Jenkins J."/>
            <person name="Johnson-Hopson C."/>
            <person name="Khan S."/>
            <person name="Khaykin E."/>
            <person name="Kim C.J."/>
            <person name="Koo H.L."/>
            <person name="Kremenetskaia I."/>
            <person name="Kurtz D.B."/>
            <person name="Kwan A."/>
            <person name="Lam B."/>
            <person name="Langin-Hooper S."/>
            <person name="Lee A."/>
            <person name="Lee J.M."/>
            <person name="Lenz C.A."/>
            <person name="Li J.H."/>
            <person name="Li Y.-P."/>
            <person name="Lin X."/>
            <person name="Liu S.X."/>
            <person name="Liu Z.A."/>
            <person name="Luros J.S."/>
            <person name="Maiti R."/>
            <person name="Marziali A."/>
            <person name="Militscher J."/>
            <person name="Miranda M."/>
            <person name="Nguyen M."/>
            <person name="Nierman W.C."/>
            <person name="Osborne B.I."/>
            <person name="Pai G."/>
            <person name="Peterson J."/>
            <person name="Pham P.K."/>
            <person name="Rizzo M."/>
            <person name="Rooney T."/>
            <person name="Rowley D."/>
            <person name="Sakano H."/>
            <person name="Salzberg S.L."/>
            <person name="Schwartz J.R."/>
            <person name="Shinn P."/>
            <person name="Southwick A.M."/>
            <person name="Sun H."/>
            <person name="Tallon L.J."/>
            <person name="Tambunga G."/>
            <person name="Toriumi M.J."/>
            <person name="Town C.D."/>
            <person name="Utterback T."/>
            <person name="Van Aken S."/>
            <person name="Vaysberg M."/>
            <person name="Vysotskaia V.S."/>
            <person name="Walker M."/>
            <person name="Wu D."/>
            <person name="Yu G."/>
            <person name="Fraser C.M."/>
            <person name="Venter J.C."/>
            <person name="Davis R.W."/>
        </authorList>
    </citation>
    <scope>NUCLEOTIDE SEQUENCE [LARGE SCALE GENOMIC DNA]</scope>
    <source>
        <strain>cv. Columbia</strain>
    </source>
</reference>
<reference key="2">
    <citation type="journal article" date="2017" name="Plant J.">
        <title>Araport11: a complete reannotation of the Arabidopsis thaliana reference genome.</title>
        <authorList>
            <person name="Cheng C.Y."/>
            <person name="Krishnakumar V."/>
            <person name="Chan A.P."/>
            <person name="Thibaud-Nissen F."/>
            <person name="Schobel S."/>
            <person name="Town C.D."/>
        </authorList>
    </citation>
    <scope>GENOME REANNOTATION</scope>
    <source>
        <strain>cv. Columbia</strain>
    </source>
</reference>
<reference key="3">
    <citation type="journal article" date="2003" name="Science">
        <title>Empirical analysis of transcriptional activity in the Arabidopsis genome.</title>
        <authorList>
            <person name="Yamada K."/>
            <person name="Lim J."/>
            <person name="Dale J.M."/>
            <person name="Chen H."/>
            <person name="Shinn P."/>
            <person name="Palm C.J."/>
            <person name="Southwick A.M."/>
            <person name="Wu H.C."/>
            <person name="Kim C.J."/>
            <person name="Nguyen M."/>
            <person name="Pham P.K."/>
            <person name="Cheuk R.F."/>
            <person name="Karlin-Newmann G."/>
            <person name="Liu S.X."/>
            <person name="Lam B."/>
            <person name="Sakano H."/>
            <person name="Wu T."/>
            <person name="Yu G."/>
            <person name="Miranda M."/>
            <person name="Quach H.L."/>
            <person name="Tripp M."/>
            <person name="Chang C.H."/>
            <person name="Lee J.M."/>
            <person name="Toriumi M.J."/>
            <person name="Chan M.M."/>
            <person name="Tang C.C."/>
            <person name="Onodera C.S."/>
            <person name="Deng J.M."/>
            <person name="Akiyama K."/>
            <person name="Ansari Y."/>
            <person name="Arakawa T."/>
            <person name="Banh J."/>
            <person name="Banno F."/>
            <person name="Bowser L."/>
            <person name="Brooks S.Y."/>
            <person name="Carninci P."/>
            <person name="Chao Q."/>
            <person name="Choy N."/>
            <person name="Enju A."/>
            <person name="Goldsmith A.D."/>
            <person name="Gurjal M."/>
            <person name="Hansen N.F."/>
            <person name="Hayashizaki Y."/>
            <person name="Johnson-Hopson C."/>
            <person name="Hsuan V.W."/>
            <person name="Iida K."/>
            <person name="Karnes M."/>
            <person name="Khan S."/>
            <person name="Koesema E."/>
            <person name="Ishida J."/>
            <person name="Jiang P.X."/>
            <person name="Jones T."/>
            <person name="Kawai J."/>
            <person name="Kamiya A."/>
            <person name="Meyers C."/>
            <person name="Nakajima M."/>
            <person name="Narusaka M."/>
            <person name="Seki M."/>
            <person name="Sakurai T."/>
            <person name="Satou M."/>
            <person name="Tamse R."/>
            <person name="Vaysberg M."/>
            <person name="Wallender E.K."/>
            <person name="Wong C."/>
            <person name="Yamamura Y."/>
            <person name="Yuan S."/>
            <person name="Shinozaki K."/>
            <person name="Davis R.W."/>
            <person name="Theologis A."/>
            <person name="Ecker J.R."/>
        </authorList>
    </citation>
    <scope>NUCLEOTIDE SEQUENCE [LARGE SCALE MRNA]</scope>
    <source>
        <strain>cv. Columbia</strain>
    </source>
</reference>
<reference key="4">
    <citation type="submission" date="2005-03" db="EMBL/GenBank/DDBJ databases">
        <title>Large-scale analysis of RIKEN Arabidopsis full-length (RAFL) cDNAs.</title>
        <authorList>
            <person name="Totoki Y."/>
            <person name="Seki M."/>
            <person name="Ishida J."/>
            <person name="Nakajima M."/>
            <person name="Enju A."/>
            <person name="Kamiya A."/>
            <person name="Narusaka M."/>
            <person name="Shin-i T."/>
            <person name="Nakagawa M."/>
            <person name="Sakamoto N."/>
            <person name="Oishi K."/>
            <person name="Kohara Y."/>
            <person name="Kobayashi M."/>
            <person name="Toyoda A."/>
            <person name="Sakaki Y."/>
            <person name="Sakurai T."/>
            <person name="Iida K."/>
            <person name="Akiyama K."/>
            <person name="Satou M."/>
            <person name="Toyoda T."/>
            <person name="Konagaya A."/>
            <person name="Carninci P."/>
            <person name="Kawai J."/>
            <person name="Hayashizaki Y."/>
            <person name="Shinozaki K."/>
        </authorList>
    </citation>
    <scope>NUCLEOTIDE SEQUENCE [LARGE SCALE MRNA] OF 478-844</scope>
    <source>
        <strain>cv. Columbia</strain>
    </source>
</reference>
<reference key="5">
    <citation type="journal article" date="2007" name="Dev. Biol.">
        <title>C2H2 zinc finger-SET histone methyltransferase is a plant-specific chromatin modifier.</title>
        <authorList>
            <person name="Krichevsky A."/>
            <person name="Gutgarts H."/>
            <person name="Kozlovsky S.V."/>
            <person name="Tzfira T."/>
            <person name="Sutton A."/>
            <person name="Sternglanz R."/>
            <person name="Mandel G."/>
            <person name="Citovsky V."/>
        </authorList>
    </citation>
    <scope>INTERACTION WITH CZS</scope>
    <source>
        <strain>cv. Columbia</strain>
    </source>
</reference>
<reference key="6">
    <citation type="journal article" date="2007" name="Plant Cell">
        <title>Arabidopsis relatives of the human lysine-specific demethylase1 repress the expression of FWA and FLOWERING LOCUS C and thus promote the floral transition.</title>
        <authorList>
            <person name="Jiang D."/>
            <person name="Yang W."/>
            <person name="He Y."/>
            <person name="Amasino R.M."/>
        </authorList>
    </citation>
    <scope>FUNCTION</scope>
    <scope>TISSUE SPECIFICITY</scope>
    <source>
        <strain>cv. Columbia</strain>
    </source>
</reference>
<reference key="7">
    <citation type="journal article" date="2011" name="Proc. Natl. Acad. Sci. U.S.A.">
        <title>Involvement of KDM1C histone demethylase-OTLD1 otubain-like histone deubiquitinase complexes in plant gene repression.</title>
        <authorList>
            <person name="Krichevsky A."/>
            <person name="Zaltsman A."/>
            <person name="Lacroix B."/>
            <person name="Citovsky V."/>
        </authorList>
    </citation>
    <scope>FUNCTION</scope>
    <scope>DISRUPTION PHENOTYPE</scope>
    <scope>INTERACTION WITH OTU6/OTLD1</scope>
    <scope>SUBCELLULAR LOCATION</scope>
    <source>
        <strain>cv. Columbia</strain>
    </source>
</reference>
<reference key="8">
    <citation type="journal article" date="2015" name="Front. Plant Sci.">
        <title>Arabidopsis histone demethylases LDL1 and LDL2 control primary seed dormancy by regulating DELAY OF GERMINATION 1 and ABA signaling-related genes.</title>
        <authorList>
            <person name="Zhao M."/>
            <person name="Yang S."/>
            <person name="Liu X."/>
            <person name="Wu K."/>
        </authorList>
    </citation>
    <scope>FUNCTION</scope>
</reference>
<accession>Q8VXV7</accession>
<accession>Q56WM3</accession>
<accession>Q9SI68</accession>
<feature type="chain" id="PRO_0000342893" description="Lysine-specific histone demethylase 1 homolog 1">
    <location>
        <begin position="1"/>
        <end position="844"/>
    </location>
</feature>
<feature type="domain" description="SWIRM" evidence="2">
    <location>
        <begin position="154"/>
        <end position="255"/>
    </location>
</feature>
<feature type="region of interest" description="Disordered" evidence="4">
    <location>
        <begin position="1"/>
        <end position="131"/>
    </location>
</feature>
<feature type="short sequence motif" description="Nuclear localization signal" evidence="3">
    <location>
        <begin position="516"/>
        <end position="523"/>
    </location>
</feature>
<feature type="compositionally biased region" description="Basic and acidic residues" evidence="4">
    <location>
        <begin position="1"/>
        <end position="18"/>
    </location>
</feature>
<feature type="compositionally biased region" description="Acidic residues" evidence="4">
    <location>
        <begin position="26"/>
        <end position="40"/>
    </location>
</feature>
<feature type="compositionally biased region" description="Polar residues" evidence="4">
    <location>
        <begin position="46"/>
        <end position="62"/>
    </location>
</feature>
<feature type="compositionally biased region" description="Polar residues" evidence="4">
    <location>
        <begin position="107"/>
        <end position="118"/>
    </location>
</feature>
<feature type="binding site" evidence="1">
    <location>
        <position position="295"/>
    </location>
    <ligand>
        <name>FAD</name>
        <dbReference type="ChEBI" id="CHEBI:57692"/>
    </ligand>
</feature>
<feature type="binding site" evidence="1">
    <location>
        <position position="297"/>
    </location>
    <ligand>
        <name>FAD</name>
        <dbReference type="ChEBI" id="CHEBI:57692"/>
    </ligand>
</feature>
<feature type="binding site" evidence="1">
    <location>
        <position position="303"/>
    </location>
    <ligand>
        <name>FAD</name>
        <dbReference type="ChEBI" id="CHEBI:57692"/>
    </ligand>
</feature>
<feature type="binding site" evidence="1">
    <location>
        <position position="679"/>
    </location>
    <ligand>
        <name>FAD</name>
        <dbReference type="ChEBI" id="CHEBI:57692"/>
    </ligand>
</feature>
<dbReference type="EC" id="1.-.-.-" evidence="13"/>
<dbReference type="EMBL" id="AC007190">
    <property type="protein sequence ID" value="AAF19542.1"/>
    <property type="status" value="ALT_SEQ"/>
    <property type="molecule type" value="Genomic_DNA"/>
</dbReference>
<dbReference type="EMBL" id="CP002684">
    <property type="protein sequence ID" value="AEE34010.1"/>
    <property type="molecule type" value="Genomic_DNA"/>
</dbReference>
<dbReference type="EMBL" id="AY074561">
    <property type="protein sequence ID" value="AAL67101.1"/>
    <property type="molecule type" value="mRNA"/>
</dbReference>
<dbReference type="EMBL" id="AY143912">
    <property type="protein sequence ID" value="AAN28851.1"/>
    <property type="molecule type" value="mRNA"/>
</dbReference>
<dbReference type="EMBL" id="AK222014">
    <property type="protein sequence ID" value="BAD94669.1"/>
    <property type="status" value="ALT_INIT"/>
    <property type="molecule type" value="mRNA"/>
</dbReference>
<dbReference type="RefSeq" id="NP_176471.1">
    <property type="nucleotide sequence ID" value="NM_104961.4"/>
</dbReference>
<dbReference type="SMR" id="Q8VXV7"/>
<dbReference type="BioGRID" id="27803">
    <property type="interactions" value="5"/>
</dbReference>
<dbReference type="FunCoup" id="Q8VXV7">
    <property type="interactions" value="4178"/>
</dbReference>
<dbReference type="IntAct" id="Q8VXV7">
    <property type="interactions" value="3"/>
</dbReference>
<dbReference type="STRING" id="3702.Q8VXV7"/>
<dbReference type="iPTMnet" id="Q8VXV7"/>
<dbReference type="PaxDb" id="3702-AT1G62830.1"/>
<dbReference type="ProteomicsDB" id="237132"/>
<dbReference type="EnsemblPlants" id="AT1G62830.1">
    <property type="protein sequence ID" value="AT1G62830.1"/>
    <property type="gene ID" value="AT1G62830"/>
</dbReference>
<dbReference type="GeneID" id="842582"/>
<dbReference type="Gramene" id="AT1G62830.1">
    <property type="protein sequence ID" value="AT1G62830.1"/>
    <property type="gene ID" value="AT1G62830"/>
</dbReference>
<dbReference type="KEGG" id="ath:AT1G62830"/>
<dbReference type="Araport" id="AT1G62830"/>
<dbReference type="TAIR" id="AT1G62830">
    <property type="gene designation" value="LDL1"/>
</dbReference>
<dbReference type="eggNOG" id="KOG0029">
    <property type="taxonomic scope" value="Eukaryota"/>
</dbReference>
<dbReference type="HOGENOM" id="CLU_004498_5_0_1"/>
<dbReference type="InParanoid" id="Q8VXV7"/>
<dbReference type="OMA" id="SSRGEMF"/>
<dbReference type="PhylomeDB" id="Q8VXV7"/>
<dbReference type="BioCyc" id="ARA:AT1G62830-MONOMER"/>
<dbReference type="BRENDA" id="1.14.99.66">
    <property type="organism ID" value="399"/>
</dbReference>
<dbReference type="PRO" id="PR:Q8VXV7"/>
<dbReference type="Proteomes" id="UP000006548">
    <property type="component" value="Chromosome 1"/>
</dbReference>
<dbReference type="ExpressionAtlas" id="Q8VXV7">
    <property type="expression patterns" value="baseline and differential"/>
</dbReference>
<dbReference type="GO" id="GO:0005737">
    <property type="term" value="C:cytoplasm"/>
    <property type="evidence" value="ECO:0000314"/>
    <property type="project" value="UniProtKB"/>
</dbReference>
<dbReference type="GO" id="GO:0005634">
    <property type="term" value="C:nucleus"/>
    <property type="evidence" value="ECO:0000314"/>
    <property type="project" value="UniProtKB"/>
</dbReference>
<dbReference type="GO" id="GO:0016491">
    <property type="term" value="F:oxidoreductase activity"/>
    <property type="evidence" value="ECO:0007669"/>
    <property type="project" value="UniProtKB-KW"/>
</dbReference>
<dbReference type="GO" id="GO:0006325">
    <property type="term" value="P:chromatin organization"/>
    <property type="evidence" value="ECO:0007669"/>
    <property type="project" value="UniProtKB-KW"/>
</dbReference>
<dbReference type="GO" id="GO:0045892">
    <property type="term" value="P:negative regulation of DNA-templated transcription"/>
    <property type="evidence" value="ECO:0000314"/>
    <property type="project" value="UniProtKB"/>
</dbReference>
<dbReference type="GO" id="GO:0048364">
    <property type="term" value="P:root development"/>
    <property type="evidence" value="ECO:0000315"/>
    <property type="project" value="TAIR"/>
</dbReference>
<dbReference type="FunFam" id="1.10.10.10:FF:000064">
    <property type="entry name" value="Lysine-specific histone demethylase 1A"/>
    <property type="match status" value="1"/>
</dbReference>
<dbReference type="Gene3D" id="3.90.660.10">
    <property type="match status" value="1"/>
</dbReference>
<dbReference type="Gene3D" id="3.50.50.60">
    <property type="entry name" value="FAD/NAD(P)-binding domain"/>
    <property type="match status" value="1"/>
</dbReference>
<dbReference type="Gene3D" id="1.10.10.10">
    <property type="entry name" value="Winged helix-like DNA-binding domain superfamily/Winged helix DNA-binding domain"/>
    <property type="match status" value="1"/>
</dbReference>
<dbReference type="InterPro" id="IPR002937">
    <property type="entry name" value="Amino_oxidase"/>
</dbReference>
<dbReference type="InterPro" id="IPR036188">
    <property type="entry name" value="FAD/NAD-bd_sf"/>
</dbReference>
<dbReference type="InterPro" id="IPR050281">
    <property type="entry name" value="Flavin_monoamine_oxidase"/>
</dbReference>
<dbReference type="InterPro" id="IPR009057">
    <property type="entry name" value="Homeodomain-like_sf"/>
</dbReference>
<dbReference type="InterPro" id="IPR007526">
    <property type="entry name" value="SWIRM"/>
</dbReference>
<dbReference type="InterPro" id="IPR036388">
    <property type="entry name" value="WH-like_DNA-bd_sf"/>
</dbReference>
<dbReference type="PANTHER" id="PTHR10742">
    <property type="entry name" value="FLAVIN MONOAMINE OXIDASE"/>
    <property type="match status" value="1"/>
</dbReference>
<dbReference type="PANTHER" id="PTHR10742:SF381">
    <property type="entry name" value="LYSINE-SPECIFIC HISTONE DEMETHYLASE 1 HOMOLOG 1"/>
    <property type="match status" value="1"/>
</dbReference>
<dbReference type="Pfam" id="PF01593">
    <property type="entry name" value="Amino_oxidase"/>
    <property type="match status" value="1"/>
</dbReference>
<dbReference type="Pfam" id="PF04433">
    <property type="entry name" value="SWIRM"/>
    <property type="match status" value="1"/>
</dbReference>
<dbReference type="SUPFAM" id="SSF54373">
    <property type="entry name" value="FAD-linked reductases, C-terminal domain"/>
    <property type="match status" value="1"/>
</dbReference>
<dbReference type="SUPFAM" id="SSF51905">
    <property type="entry name" value="FAD/NAD(P)-binding domain"/>
    <property type="match status" value="1"/>
</dbReference>
<dbReference type="SUPFAM" id="SSF46689">
    <property type="entry name" value="Homeodomain-like"/>
    <property type="match status" value="1"/>
</dbReference>
<dbReference type="PROSITE" id="PS50934">
    <property type="entry name" value="SWIRM"/>
    <property type="match status" value="1"/>
</dbReference>
<organism>
    <name type="scientific">Arabidopsis thaliana</name>
    <name type="common">Mouse-ear cress</name>
    <dbReference type="NCBI Taxonomy" id="3702"/>
    <lineage>
        <taxon>Eukaryota</taxon>
        <taxon>Viridiplantae</taxon>
        <taxon>Streptophyta</taxon>
        <taxon>Embryophyta</taxon>
        <taxon>Tracheophyta</taxon>
        <taxon>Spermatophyta</taxon>
        <taxon>Magnoliopsida</taxon>
        <taxon>eudicotyledons</taxon>
        <taxon>Gunneridae</taxon>
        <taxon>Pentapetalae</taxon>
        <taxon>rosids</taxon>
        <taxon>malvids</taxon>
        <taxon>Brassicales</taxon>
        <taxon>Brassicaceae</taxon>
        <taxon>Camelineae</taxon>
        <taxon>Arabidopsis</taxon>
    </lineage>
</organism>
<proteinExistence type="evidence at protein level"/>
<comment type="function">
    <text evidence="6 7 8">Probable histone demethylase that reduces the levels of histone H3 'Lys-4' methylation in chromatin of the floral repressor FLOWERING LOCUS C (FLC) and the sporophytically silenced floral repressor FWA (PubMed:17921315). Seems to act in partial redundancy with FLOWERING LOCUS D (FLD) to repress FLC expression (PubMed:17921315). Required for cytosine methylation of FWA (PubMed:17921315). Controls primary seed dormancy by regulating DOG1 and abscisic acid signaling-related genes (PubMed:25852712). In association with OTU6/OTLD1, involved in transcriptional gene repression via histone deubiquitination and demethylation (PubMed:21690391).</text>
</comment>
<comment type="cofactor">
    <cofactor evidence="13">
        <name>FAD</name>
        <dbReference type="ChEBI" id="CHEBI:57692"/>
    </cofactor>
</comment>
<comment type="subunit">
    <text evidence="5 7">Interacts with CZS (PubMed:17224141). Interacts with OTU6/OTLD1 (PubMed:21690391).</text>
</comment>
<comment type="subcellular location">
    <subcellularLocation>
        <location evidence="3 7">Nucleus</location>
    </subcellularLocation>
    <subcellularLocation>
        <location evidence="7">Cytoplasm</location>
    </subcellularLocation>
</comment>
<comment type="tissue specificity">
    <text evidence="6">Expressed in the shoot and root apical regions of young seedlings. Expressed in cotyledons and inflorescences.</text>
</comment>
<comment type="disruption phenotype">
    <text evidence="7">Up-regulated expression of GLP2A/GLP5A due to derepression associated with hyperubiquitination of the target chromatin and H3K4 hypermethylation.</text>
</comment>
<comment type="similarity">
    <text evidence="13">Belongs to the flavin monoamine oxidase family.</text>
</comment>
<comment type="sequence caution" evidence="13">
    <conflict type="erroneous gene model prediction">
        <sequence resource="EMBL-CDS" id="AAF19542"/>
    </conflict>
    <text>The predicted gene has been split into 3 genes: At1g62810, At1g62820 and At1g62830.</text>
</comment>
<comment type="sequence caution" evidence="13">
    <conflict type="erroneous initiation">
        <sequence resource="EMBL-CDS" id="BAD94669"/>
    </conflict>
    <text>Truncated N-terminus.</text>
</comment>